<proteinExistence type="inferred from homology"/>
<reference key="1">
    <citation type="journal article" date="1990" name="Mol. Microbiol.">
        <title>Five genes at the 3' end of the Klebsiella pneumoniae pulC operon are required for pullulanase secretion.</title>
        <authorList>
            <person name="Pugsley A.P."/>
            <person name="Reyss I."/>
        </authorList>
    </citation>
    <scope>NUCLEOTIDE SEQUENCE [GENOMIC DNA]</scope>
    <source>
        <strain>UNF 5023</strain>
    </source>
</reference>
<feature type="chain" id="PRO_0000195054" description="Type II secretion system protein N">
    <location>
        <begin position="1"/>
        <end position="252"/>
    </location>
</feature>
<feature type="topological domain" description="Cytoplasmic" evidence="2">
    <location>
        <begin position="1"/>
        <end position="4"/>
    </location>
</feature>
<feature type="transmembrane region" description="Helical" evidence="2">
    <location>
        <begin position="5"/>
        <end position="25"/>
    </location>
</feature>
<feature type="topological domain" description="Periplasmic" evidence="2">
    <location>
        <begin position="26"/>
        <end position="252"/>
    </location>
</feature>
<sequence length="252" mass="27694">MKNRLTIGLLLAAIYLFWLLLSAPARLLALTLSDDARLAQTSGTLWQGEAHQASWRGVELAYLRWEFGFSTWLPGWHIRFNDPSGLRGQAWLHGLNEFVVREGRLVIPARLISQRLALGMPLEARGQLALTLPEASFNANGCRRIAASAVQWQDAALSSPAGLLELAQVNGKLSCTPAGALAVALTQDSHQLSLTGQGVLTPDGRYTFNGTLQPRQAAPALLTLLVAQNGRKDEQGRIPWRWQGEWLSEEKK</sequence>
<gene>
    <name type="primary">pulN</name>
</gene>
<name>GSPN_KLEPN</name>
<organism>
    <name type="scientific">Klebsiella pneumoniae</name>
    <dbReference type="NCBI Taxonomy" id="573"/>
    <lineage>
        <taxon>Bacteria</taxon>
        <taxon>Pseudomonadati</taxon>
        <taxon>Pseudomonadota</taxon>
        <taxon>Gammaproteobacteria</taxon>
        <taxon>Enterobacterales</taxon>
        <taxon>Enterobacteriaceae</taxon>
        <taxon>Klebsiella/Raoultella group</taxon>
        <taxon>Klebsiella</taxon>
        <taxon>Klebsiella pneumoniae complex</taxon>
    </lineage>
</organism>
<evidence type="ECO:0000250" key="1"/>
<evidence type="ECO:0000255" key="2"/>
<evidence type="ECO:0000305" key="3"/>
<accession>P15753</accession>
<comment type="function">
    <text evidence="1">Involved in a type II secretion system (T2SS, formerly general secretion pathway, GSP) for the export of proteins (By similarity). Required for the translocation of pullulanase.</text>
</comment>
<comment type="subcellular location">
    <subcellularLocation>
        <location evidence="3">Cell inner membrane</location>
    </subcellularLocation>
</comment>
<comment type="similarity">
    <text evidence="3">Belongs to the GSP N family.</text>
</comment>
<keyword id="KW-0997">Cell inner membrane</keyword>
<keyword id="KW-1003">Cell membrane</keyword>
<keyword id="KW-0472">Membrane</keyword>
<keyword id="KW-0653">Protein transport</keyword>
<keyword id="KW-0812">Transmembrane</keyword>
<keyword id="KW-1133">Transmembrane helix</keyword>
<keyword id="KW-0813">Transport</keyword>
<dbReference type="EMBL" id="M32613">
    <property type="protein sequence ID" value="AAA25136.1"/>
    <property type="molecule type" value="Genomic_DNA"/>
</dbReference>
<dbReference type="EMBL" id="X52462">
    <property type="protein sequence ID" value="CAA36699.1"/>
    <property type="molecule type" value="Genomic_DNA"/>
</dbReference>
<dbReference type="PIR" id="S11802">
    <property type="entry name" value="S11802"/>
</dbReference>
<dbReference type="TCDB" id="3.A.15.1.1">
    <property type="family name" value="the outer membrane protein secreting main terminal branch (mtb) family"/>
</dbReference>
<dbReference type="GO" id="GO:0005886">
    <property type="term" value="C:plasma membrane"/>
    <property type="evidence" value="ECO:0007669"/>
    <property type="project" value="UniProtKB-SubCell"/>
</dbReference>
<dbReference type="GO" id="GO:0015627">
    <property type="term" value="C:type II protein secretion system complex"/>
    <property type="evidence" value="ECO:0007669"/>
    <property type="project" value="InterPro"/>
</dbReference>
<dbReference type="GO" id="GO:0015628">
    <property type="term" value="P:protein secretion by the type II secretion system"/>
    <property type="evidence" value="ECO:0007669"/>
    <property type="project" value="InterPro"/>
</dbReference>
<dbReference type="InterPro" id="IPR000645">
    <property type="entry name" value="T2SS_GspN_CS"/>
</dbReference>
<dbReference type="InterPro" id="IPR022792">
    <property type="entry name" value="T2SS_protein-GspN"/>
</dbReference>
<dbReference type="Pfam" id="PF01203">
    <property type="entry name" value="T2SSN"/>
    <property type="match status" value="1"/>
</dbReference>
<dbReference type="PROSITE" id="PS01142">
    <property type="entry name" value="T2SP_N"/>
    <property type="match status" value="1"/>
</dbReference>
<protein>
    <recommendedName>
        <fullName>Type II secretion system protein N</fullName>
        <shortName>T2SS protein N</shortName>
    </recommendedName>
    <alternativeName>
        <fullName>General secretion pathway protein N</fullName>
    </alternativeName>
    <alternativeName>
        <fullName>Pullulanase secretion protein PulN</fullName>
    </alternativeName>
</protein>